<dbReference type="EC" id="3.4.22.-" evidence="4"/>
<dbReference type="EMBL" id="X54358">
    <property type="protein sequence ID" value="CAA38242.1"/>
    <property type="molecule type" value="mRNA"/>
</dbReference>
<dbReference type="PIR" id="S11862">
    <property type="entry name" value="S11862"/>
</dbReference>
<dbReference type="SMR" id="P25804"/>
<dbReference type="MEROPS" id="C01.022"/>
<dbReference type="GO" id="GO:0008234">
    <property type="term" value="F:cysteine-type peptidase activity"/>
    <property type="evidence" value="ECO:0007669"/>
    <property type="project" value="UniProtKB-KW"/>
</dbReference>
<dbReference type="GO" id="GO:0006508">
    <property type="term" value="P:proteolysis"/>
    <property type="evidence" value="ECO:0007669"/>
    <property type="project" value="UniProtKB-KW"/>
</dbReference>
<dbReference type="CDD" id="cd02248">
    <property type="entry name" value="Peptidase_C1A"/>
    <property type="match status" value="1"/>
</dbReference>
<dbReference type="FunFam" id="3.90.70.10:FF:000057">
    <property type="entry name" value="Cysteine protease RD19A"/>
    <property type="match status" value="1"/>
</dbReference>
<dbReference type="Gene3D" id="3.90.70.10">
    <property type="entry name" value="Cysteine proteinases"/>
    <property type="match status" value="1"/>
</dbReference>
<dbReference type="InterPro" id="IPR038765">
    <property type="entry name" value="Papain-like_cys_pep_sf"/>
</dbReference>
<dbReference type="InterPro" id="IPR025661">
    <property type="entry name" value="Pept_asp_AS"/>
</dbReference>
<dbReference type="InterPro" id="IPR000169">
    <property type="entry name" value="Pept_cys_AS"/>
</dbReference>
<dbReference type="InterPro" id="IPR025660">
    <property type="entry name" value="Pept_his_AS"/>
</dbReference>
<dbReference type="InterPro" id="IPR013128">
    <property type="entry name" value="Peptidase_C1A"/>
</dbReference>
<dbReference type="InterPro" id="IPR000668">
    <property type="entry name" value="Peptidase_C1A_C"/>
</dbReference>
<dbReference type="InterPro" id="IPR039417">
    <property type="entry name" value="Peptidase_C1A_papain-like"/>
</dbReference>
<dbReference type="InterPro" id="IPR013201">
    <property type="entry name" value="Prot_inhib_I29"/>
</dbReference>
<dbReference type="PANTHER" id="PTHR12411">
    <property type="entry name" value="CYSTEINE PROTEASE FAMILY C1-RELATED"/>
    <property type="match status" value="1"/>
</dbReference>
<dbReference type="Pfam" id="PF08246">
    <property type="entry name" value="Inhibitor_I29"/>
    <property type="match status" value="1"/>
</dbReference>
<dbReference type="Pfam" id="PF00112">
    <property type="entry name" value="Peptidase_C1"/>
    <property type="match status" value="1"/>
</dbReference>
<dbReference type="PRINTS" id="PR00705">
    <property type="entry name" value="PAPAIN"/>
</dbReference>
<dbReference type="SMART" id="SM00848">
    <property type="entry name" value="Inhibitor_I29"/>
    <property type="match status" value="1"/>
</dbReference>
<dbReference type="SMART" id="SM00645">
    <property type="entry name" value="Pept_C1"/>
    <property type="match status" value="1"/>
</dbReference>
<dbReference type="SUPFAM" id="SSF54001">
    <property type="entry name" value="Cysteine proteinases"/>
    <property type="match status" value="1"/>
</dbReference>
<dbReference type="PROSITE" id="PS00640">
    <property type="entry name" value="THIOL_PROTEASE_ASN"/>
    <property type="match status" value="1"/>
</dbReference>
<dbReference type="PROSITE" id="PS00139">
    <property type="entry name" value="THIOL_PROTEASE_CYS"/>
    <property type="match status" value="1"/>
</dbReference>
<dbReference type="PROSITE" id="PS00639">
    <property type="entry name" value="THIOL_PROTEASE_HIS"/>
    <property type="match status" value="1"/>
</dbReference>
<proteinExistence type="evidence at transcript level"/>
<name>CYSP_PEA</name>
<feature type="signal peptide" evidence="5">
    <location>
        <begin position="1"/>
        <end position="18"/>
    </location>
</feature>
<feature type="propeptide" id="PRO_0000026451" description="Activation peptide" evidence="1">
    <location>
        <begin position="19"/>
        <end position="131"/>
    </location>
</feature>
<feature type="chain" id="PRO_0000026452" description="Cysteine proteinase 15A">
    <location>
        <begin position="132"/>
        <end position="363"/>
    </location>
</feature>
<feature type="active site" evidence="7">
    <location>
        <position position="156"/>
    </location>
</feature>
<feature type="active site" evidence="8">
    <location>
        <position position="299"/>
    </location>
</feature>
<feature type="active site" evidence="9">
    <location>
        <position position="326"/>
    </location>
</feature>
<feature type="glycosylation site" description="N-linked (GlcNAc...) asparagine" evidence="6">
    <location>
        <position position="249"/>
    </location>
</feature>
<feature type="disulfide bond" evidence="2">
    <location>
        <begin position="153"/>
        <end position="203"/>
    </location>
</feature>
<feature type="disulfide bond" evidence="3">
    <location>
        <begin position="187"/>
        <end position="236"/>
    </location>
</feature>
<feature type="disulfide bond" evidence="3">
    <location>
        <begin position="292"/>
        <end position="347"/>
    </location>
</feature>
<evidence type="ECO:0000250" key="1">
    <source>
        <dbReference type="UniProtKB" id="P00785"/>
    </source>
</evidence>
<evidence type="ECO:0000250" key="2">
    <source>
        <dbReference type="UniProtKB" id="P07858"/>
    </source>
</evidence>
<evidence type="ECO:0000250" key="3">
    <source>
        <dbReference type="UniProtKB" id="P25250"/>
    </source>
</evidence>
<evidence type="ECO:0000250" key="4">
    <source>
        <dbReference type="UniProtKB" id="P80884"/>
    </source>
</evidence>
<evidence type="ECO:0000255" key="5"/>
<evidence type="ECO:0000255" key="6">
    <source>
        <dbReference type="PROSITE-ProRule" id="PRU00498"/>
    </source>
</evidence>
<evidence type="ECO:0000255" key="7">
    <source>
        <dbReference type="PROSITE-ProRule" id="PRU10088"/>
    </source>
</evidence>
<evidence type="ECO:0000255" key="8">
    <source>
        <dbReference type="PROSITE-ProRule" id="PRU10089"/>
    </source>
</evidence>
<evidence type="ECO:0000255" key="9">
    <source>
        <dbReference type="PROSITE-ProRule" id="PRU10090"/>
    </source>
</evidence>
<sequence>MDRRFLFALFLFAAVATAVTDDTNNDDFIIRQVVDNEEDHLLNAEHHFTSFKSKFSKSYATKEEHDYRFGVFKSNLIKAKLHQNRDPTAEHGITKFSDLTASEFRRQFLGLKKRLRLPAHAQKAPILPTTNLPEDFDWREKGAVTPVKDQGSCGSCWAFSTTGALEGAHYLATGKLVSLSEQQLVDCDHVCDPEQAGSCDSGCNGGLMNNAFEYLLESGGVVQEKDYAYTGRDGSCKFDKSKVVASVSNFSVVTLDEDQIAANLVKNGPLAVAINAAWMQTYMSGVSCPYVCAKSRLDHGVLLVGFGKGAYAPIRLKEKPYWIIKNSWGQNWGEQGYYKICRGRNVCGVDSMVSTVAAAQSNH</sequence>
<comment type="induction">
    <text>By dehydration of shoots but not roots and not by heat shock or ABA.</text>
</comment>
<comment type="similarity">
    <text evidence="7 8 9">Belongs to the peptidase C1 family.</text>
</comment>
<reference key="1">
    <citation type="journal article" date="1990" name="Plant Mol. Biol.">
        <title>Turgor-responsive gene transcription and RNA levels increase rapidly when pea shoots are wilted. Sequence and expression of three inducible genes.</title>
        <authorList>
            <person name="Guerrero F.D."/>
            <person name="Jones J.T."/>
            <person name="Mullet J.E."/>
        </authorList>
    </citation>
    <scope>NUCLEOTIDE SEQUENCE [MRNA]</scope>
    <source>
        <strain>cv. Progress No. 9</strain>
    </source>
</reference>
<organism>
    <name type="scientific">Pisum sativum</name>
    <name type="common">Garden pea</name>
    <name type="synonym">Lathyrus oleraceus</name>
    <dbReference type="NCBI Taxonomy" id="3888"/>
    <lineage>
        <taxon>Eukaryota</taxon>
        <taxon>Viridiplantae</taxon>
        <taxon>Streptophyta</taxon>
        <taxon>Embryophyta</taxon>
        <taxon>Tracheophyta</taxon>
        <taxon>Spermatophyta</taxon>
        <taxon>Magnoliopsida</taxon>
        <taxon>eudicotyledons</taxon>
        <taxon>Gunneridae</taxon>
        <taxon>Pentapetalae</taxon>
        <taxon>rosids</taxon>
        <taxon>fabids</taxon>
        <taxon>Fabales</taxon>
        <taxon>Fabaceae</taxon>
        <taxon>Papilionoideae</taxon>
        <taxon>50 kb inversion clade</taxon>
        <taxon>NPAAA clade</taxon>
        <taxon>Hologalegina</taxon>
        <taxon>IRL clade</taxon>
        <taxon>Fabeae</taxon>
        <taxon>Pisum</taxon>
    </lineage>
</organism>
<keyword id="KW-1015">Disulfide bond</keyword>
<keyword id="KW-0325">Glycoprotein</keyword>
<keyword id="KW-0378">Hydrolase</keyword>
<keyword id="KW-0645">Protease</keyword>
<keyword id="KW-0732">Signal</keyword>
<keyword id="KW-0346">Stress response</keyword>
<keyword id="KW-0788">Thiol protease</keyword>
<keyword id="KW-0865">Zymogen</keyword>
<protein>
    <recommendedName>
        <fullName>Cysteine proteinase 15A</fullName>
        <ecNumber evidence="4">3.4.22.-</ecNumber>
    </recommendedName>
    <alternativeName>
        <fullName>Turgor-responsive protein 15A</fullName>
    </alternativeName>
</protein>
<accession>P25804</accession>